<organismHost>
    <name type="scientific">Prunus armeniaca</name>
    <name type="common">Apricot</name>
    <name type="synonym">Armeniaca vulgaris</name>
    <dbReference type="NCBI Taxonomy" id="36596"/>
</organismHost>
<organismHost>
    <name type="scientific">Prunus cerasifera</name>
    <name type="common">cherry plum</name>
    <dbReference type="NCBI Taxonomy" id="36595"/>
</organismHost>
<organismHost>
    <name type="scientific">Prunus domestica</name>
    <name type="common">Garden plum</name>
    <dbReference type="NCBI Taxonomy" id="3758"/>
</organismHost>
<organismHost>
    <name type="scientific">Prunus glandulosa</name>
    <dbReference type="NCBI Taxonomy" id="105665"/>
</organismHost>
<organismHost>
    <name type="scientific">Prunus persica</name>
    <name type="common">Peach</name>
    <name type="synonym">Amygdalus persica</name>
    <dbReference type="NCBI Taxonomy" id="3760"/>
</organismHost>
<organismHost>
    <name type="scientific">Prunus salicina</name>
    <dbReference type="NCBI Taxonomy" id="88123"/>
</organismHost>
<organismHost>
    <name type="scientific">Prunus spinosa</name>
    <name type="common">Blackthorn</name>
    <name type="synonym">Prunus domestica var. spinosa</name>
    <dbReference type="NCBI Taxonomy" id="114937"/>
</organismHost>
<sequence>MSTIVFGSFTCHLDAAIHQDNADRLAKAWTRPENRQVSNVHLLCRRAAKSLINTYESATASAWKGLEEKLQPMFAKREFSKTVTKRKGLRCFKESSEKFIEKKLRKQYQEERERFQFLNGPDAIVNQISVDKCEASVRVPFPHIIEKPSFATPSMKKKVVFTKVRMSEASLQLFMRRVAANAKANGQKVEIIGRKRVVGNYTTKSRLTYFRTHVRHLDGSKPRYDLVLDEATKKILQLFANTSGFHHVHKKGEVTPGMSGFVVNPMNLSDPMQVYDTDLFIVRGKHNSILVDSRCKVSKEQSNEIIHYSDPGKQFWDGFTNSFMQCKLRETDHQCTSDLDVKECGYVAALVCQAIIPCGKITCLQCAQKYSYMSQQEIRDRFSTVIEQHEKTVMDNYPQFSHVLAFLKRYRELMRVENQNYEAFKDITHMIGERKEAPFSHLNKINELIIKGGMMSAQDYIEASDHLRELARYQKNRTENIRSGSIKAFRNKISSKAHVNMQLMCDNQLDTNGNFVWGQREYHAKRFFRNYFDVIDVSEGYRRHIVRENPRGIRKLAIGNLVMSTNLAALRKQLLGEECIHFEVSKECTSKRGENFVYQCCCVTHEDGTPLESEIISPTKNHLVVGNSGDSKYVDLPTAKGGAMFIAKAGYCYINIFLAMLININEDEAKSFTKTVRDTLVPKLGTWPSMMDLATACHFLAILYPETRNAELPRILVDHEAKIFHVVDSFGSLSTGMHVLKANTINQLISFASDTLDSNMKTYLVGGLEVDKCDEFKNVKLLIRSIYKPQIMEQVLKEEPYLLLMSVLSPGVLMALFNSGSLEKATQYWITRSHSLAAITSMLSSLAAKVSLASTLNAQMSVIDEHAAVLCDSVFVGTKPYASYMMAVKTLERMKARTESDHTLNDLGFSVIRQATPHLVEKSYLQELEQAWKELSWSEKFSAILESQRWRKHIPKPFIPKDGADLGGRYDISVRSLLGNQYKRLRDVVRRKRDDVVCYTHQSMGKLFCKAIGISTSFLPSTLKMFDMLIVFSLLLSIGATCNSMINEHKHLKQLAADREDKKRFKRLQVLHTRLSEKVGCTPTADEFLEYVGGENPDLLKHAEDLIGDGQVVVHQSKRDSQANLERVVAFVALVMMLFDSERSDGVYKILNKLKGIMGSVDQAVQHQSLDDIEDILDEKKLTVDFVLQSNEVAPTVPFDSTFEKWWTNQLETGNVIPHYRTEGHFLEFTRENAAHIANEVMHGSHQDILIRGAVGSGKSTGLPFHLSKKGHVLLIEPTRPLAENVCKQLRGQPFNVNPTLRMRGMSTFGSTPITVMTSGYALHFLANNPTYLDNYKCIIFDECHVHDASAMAFRCLLSEYSYPGKILKVSATPPGHEVDFKTQKEVKVIVEESLSFQQFVSNLGTGCNSDILKHGVNVLVYVASYNEVDTLSKLLTDRSFKVSKVDGRTMKIGNVEIPTSGTQAKPHFVVATNIIENGVTLDIDVVVDFGLKVVPVLDIDNRLVRYTKKSISYGERIQRLGRVGRNKPGAALRIGFTEKGLTQIPPIIATEAAFLCFTYGLPVMTNGVSTSLLAMCTVKQARTMQQFELSPFYTVALVRFDGTMHQEIFRLLKSYRLRDSEVILNKLAIPNSNVCGWMSVRDYKRQGCNLDLDENIRVPFYVKDIPETLHERIWQVVETHKSDAGFGRICSSSACKIAYTLQTDIHSIPRTIKIIDALLEQERTKQAHFRAMTSQSCSSSNFSLSSITSAIRSKYAKDHTEENIGVLQTAKSQLLEFKNLNIDPSYPELVRNFGALECVHHQTKEGVSKALQLKGHWNKRLITRDATLMLGVLGGGAWMIFSYLRDSFKEEVVHQGFNRRQRQKLKFRQARDNRMAREVYGDDSTMADYFGSAYSKKGKSKGKTRGMGTKTRKFVNMYGYDPTDYNFVRFVDPLTGHTLDENPLMDINLVQEHFSQIRNDYIGDDKITMQHIMSNPGIVAYYIKDATQKALKVDLTPHNPLRVCDKTATIAGFPEREFELRQTGHPVFVEPNAIPKINEEGDEEVDHESKSLFRGLRDYNPIASSICQLNNSSGARQSVMFGLGFGGLIVTNQHLFKRNDGELTIRSHHGEFVVKDTKTLKLLPCKGRDIVIIRLPKDFPPFPKRLQFRTPTTEDRVCLIGSNFQTKSISSTMSETSATYPVDNSHFWKHWISTKDGHCGLPIVSTRDGSILGLHSLANSTNTQNFYAAFPDNFETTYLSNQDNDNWIKQWRYNPDEVCWGSLQLKRDIPQSPFTICKLLTDLDGEFVYTQSKTTHWLRDRLEGNLKAVGACPGQLVTKHVVKGKCTLFETYLLTHPEEHEFFRPLMGAYQKSALNKDAYVKDLMKYSKPIVVGAVDCDQFERAVDVVISMLISKGFEECNYVTDPDDIFSALNMKAAVGALYSGKKRDYFKNVSDQDKESFVRASCKRLFMGKKGVWNGSLKAELRPKEKVEANKTRSFTAAPIDTLLGGKVCVDDFNNQFYSLNLHCPWSVGMTKFRGGWDKLLRALPEGWIYCDADGSQFDSSLSPYLINAVLNIRLAFMEEWDIGEQMLSNLYTEIVYTPIATPDGTIVKKFKGNNSGQPSTVVDNTLMVILAMTYSLLKLGYHPDTHDCICRYFVNGDDLVLAVHPAYESIYDELQEHFSQLGLNYTFATKTENKEELWFMSHKGVLYDDMYIPKLEPERIVSILEWDRSNEPIHRLEAICASMVEAWGYKELLREIRKFYSWVLEQAPYNALSKDGKAPYIAETALKKLYTDTEASETEIERYLEAFYDDFNDDGESNVVVHQADEREDEEEVDAGKPSVVTAPAATSPILQPPPVIQPAPRTTASMLNPIFTPATTQPATKPVSQVSQPQLQTFGTYGNEDASPSNSNALVNTNRDRDVDAGSVGTFTVPRLKAMTSKLSLPKVKGKAIMNLNHLAHYSPAQVDLSNTRAPQSCFQTWYEGVKRDYDVTDDEMSIILNGLMVWCIENGTSPNINGMWVMMDGETQVEYPIKPLLDHAKPTFRQIMAHFSNVAEAYIEKRNYEKAYMPRYGIQRNLTDYSLARYAFDFYEMTSTTPVRAREAHIQMKAAALRNVQNRLFGLDGNVGTQEEDTERHTAGDVNRNMHNLLGVRGV</sequence>
<reference key="1">
    <citation type="journal article" date="1989" name="Virus Res.">
        <title>The complete nucleotide sequence of plum pox potyvirus RNA.</title>
        <authorList>
            <person name="Lain S."/>
            <person name="Riechmann J.L."/>
            <person name="Garcia J.A."/>
        </authorList>
    </citation>
    <scope>NUCLEOTIDE SEQUENCE</scope>
</reference>
<reference key="2">
    <citation type="journal article" date="1989" name="Virology">
        <title>Proteolytic activity of the plum pox potyvirus NIa-like protein in Escherichia coli.</title>
        <authorList>
            <person name="Garcia J.A."/>
            <person name="Riechmann J.L."/>
            <person name="Lain S."/>
        </authorList>
    </citation>
    <scope>NUCLEOTIDE SEQUENCE [MRNA] OF 1778-2342</scope>
</reference>
<reference key="3">
    <citation type="journal article" date="1988" name="Virus Res.">
        <title>Nucleotide sequence of the 3' terminal region of plum pox potyvirus RNA.</title>
        <authorList>
            <person name="Lain S."/>
            <person name="Riechmann J.L."/>
            <person name="Mendez E."/>
            <person name="Garcia J.A."/>
        </authorList>
    </citation>
    <scope>NUCLEOTIDE SEQUENCE [GENOMIC RNA] OF 2263-3140</scope>
</reference>
<reference key="4">
    <citation type="journal article" date="2001" name="Virus Res.">
        <title>Potyvirus proteins: a wealth of functions.</title>
        <authorList>
            <person name="Urcuqui-Inchima S."/>
            <person name="Haenni A.L."/>
            <person name="Bernardi F."/>
        </authorList>
    </citation>
    <scope>REVIEW</scope>
</reference>
<reference key="5">
    <citation type="journal article" date="2013" name="Virology">
        <title>O-GlcNAc modification of the coat protein of the potyvirus Plum pox virus enhances viral infection.</title>
        <authorList>
            <person name="Perez J.J."/>
            <person name="Udeshi N.D."/>
            <person name="Shabanowitz J."/>
            <person name="Ciordia S."/>
            <person name="Juarez S."/>
            <person name="Scott C.L."/>
            <person name="Olszewski N.E."/>
            <person name="Hunt D.F."/>
            <person name="Garcia J.A."/>
        </authorList>
    </citation>
    <scope>GLYCOSYLATION AT THR-2829; THR-2834; THR-2851; THR-2863; SER-2875; THR-2864 AND THR-2868 (CAPSID PROTEIN)</scope>
</reference>
<reference key="6">
    <citation type="journal article" date="2018" name="Mol. Plant Pathol.">
        <title>Phosphorylation coexists with O-GlcNAcylation in a plant virus protein and influences viral infection.</title>
        <authorList>
            <person name="Martinez-Turino S."/>
            <person name="Perez J.J."/>
            <person name="Hervas M."/>
            <person name="Navajas R."/>
            <person name="Ciordia S."/>
            <person name="Udeshi N.D."/>
            <person name="Shabanowitz J."/>
            <person name="Hunt D.F."/>
            <person name="Garcia J.A."/>
        </authorList>
    </citation>
    <scope>PHOSPHORYLATION AT SER-2835; SER-2891; SER-2911 AND SER-2928</scope>
</reference>
<reference key="7">
    <citation type="journal article" date="2020" name="Mol. Plant Microbe Interact.">
        <title>Phosphorylation-Related Crosstalk Between Distant Regions of the Core Region of the Coat Protein Contributes to Virion Assembly of Plum Pox Virus.</title>
        <authorList>
            <person name="Hervas M."/>
            <person name="Navajas R."/>
            <person name="Chagoyen M."/>
            <person name="Garcia J.A."/>
            <person name="Martinez-Turino S."/>
        </authorList>
    </citation>
    <scope>PHOSPHORYLATION AT THR-3064 AND THR-3123</scope>
    <scope>MUTAGENESIS OF THR-3064 AND THR-3123</scope>
</reference>
<accession>P17767</accession>
<proteinExistence type="evidence at protein level"/>
<organism>
    <name type="scientific">Plum pox potyvirus (strain Rankovic)</name>
    <name type="common">PPV</name>
    <dbReference type="NCBI Taxonomy" id="12214"/>
    <lineage>
        <taxon>Viruses</taxon>
        <taxon>Riboviria</taxon>
        <taxon>Orthornavirae</taxon>
        <taxon>Pisuviricota</taxon>
        <taxon>Stelpaviricetes</taxon>
        <taxon>Patatavirales</taxon>
        <taxon>Potyviridae</taxon>
        <taxon>Potyvirus</taxon>
        <taxon>Potyvirus plumpoxi</taxon>
        <taxon>Plum pox virus</taxon>
    </lineage>
</organism>
<keyword id="KW-0067">ATP-binding</keyword>
<keyword id="KW-0167">Capsid protein</keyword>
<keyword id="KW-0191">Covalent protein-RNA linkage</keyword>
<keyword id="KW-0325">Glycoprotein</keyword>
<keyword id="KW-1139">Helical capsid protein</keyword>
<keyword id="KW-0347">Helicase</keyword>
<keyword id="KW-1036">Host cytoplasmic vesicle</keyword>
<keyword id="KW-1048">Host nucleus</keyword>
<keyword id="KW-0945">Host-virus interaction</keyword>
<keyword id="KW-0378">Hydrolase</keyword>
<keyword id="KW-1090">Inhibition of host innate immune response by virus</keyword>
<keyword id="KW-0547">Nucleotide-binding</keyword>
<keyword id="KW-0548">Nucleotidyltransferase</keyword>
<keyword id="KW-0597">Phosphoprotein</keyword>
<keyword id="KW-0645">Protease</keyword>
<keyword id="KW-0696">RNA-directed RNA polymerase</keyword>
<keyword id="KW-0720">Serine protease</keyword>
<keyword id="KW-0941">Suppressor of RNA silencing</keyword>
<keyword id="KW-0788">Thiol protease</keyword>
<keyword id="KW-0808">Transferase</keyword>
<keyword id="KW-0899">Viral immunoevasion</keyword>
<keyword id="KW-0693">Viral RNA replication</keyword>
<keyword id="KW-0946">Virion</keyword>
<protein>
    <recommendedName>
        <fullName>Genome polyprotein</fullName>
    </recommendedName>
    <component>
        <recommendedName>
            <fullName>P1 protease</fullName>
            <ecNumber>3.4.21.-</ecNumber>
        </recommendedName>
        <alternativeName>
            <fullName>Leader protease P1</fullName>
        </alternativeName>
        <alternativeName>
            <fullName>N-terminal protein</fullName>
        </alternativeName>
        <alternativeName>
            <fullName>P1 proteinase</fullName>
        </alternativeName>
    </component>
    <component>
        <recommendedName>
            <fullName>Helper component proteinase</fullName>
            <shortName>HC-pro</shortName>
            <ecNumber evidence="2">3.4.22.45</ecNumber>
        </recommendedName>
    </component>
    <component>
        <recommendedName>
            <fullName>Protein P3</fullName>
        </recommendedName>
    </component>
    <component>
        <recommendedName>
            <fullName>6 kDa protein 1</fullName>
            <shortName>6K1</shortName>
        </recommendedName>
    </component>
    <component>
        <recommendedName>
            <fullName>Cytoplasmic inclusion protein</fullName>
            <shortName>CI</shortName>
            <ecNumber>3.6.4.-</ecNumber>
        </recommendedName>
    </component>
    <component>
        <recommendedName>
            <fullName>6 kDa protein 2</fullName>
            <shortName>6K2</shortName>
        </recommendedName>
    </component>
    <component>
        <recommendedName>
            <fullName>Viral genome-linked protein</fullName>
        </recommendedName>
        <alternativeName>
            <fullName>VPg</fullName>
        </alternativeName>
    </component>
    <component>
        <recommendedName>
            <fullName>Nuclear inclusion protein A</fullName>
            <shortName>NI-a</shortName>
            <shortName>NIa</shortName>
            <ecNumber>3.4.22.44</ecNumber>
        </recommendedName>
        <alternativeName>
            <fullName>49 kDa proteinase</fullName>
            <shortName>49 kDa-Pro</shortName>
        </alternativeName>
        <alternativeName>
            <fullName>NIa-pro</fullName>
        </alternativeName>
    </component>
    <component>
        <recommendedName>
            <fullName>Nuclear inclusion protein B</fullName>
            <shortName>NI-b</shortName>
            <shortName>NIb</shortName>
            <ecNumber>2.7.7.48</ecNumber>
        </recommendedName>
        <alternativeName>
            <fullName>RNA-directed RNA polymerase</fullName>
        </alternativeName>
    </component>
    <component>
        <recommendedName>
            <fullName>Capsid protein</fullName>
            <shortName>CP</shortName>
        </recommendedName>
        <alternativeName>
            <fullName>Coat protein</fullName>
        </alternativeName>
    </component>
</protein>
<comment type="function">
    <molecule>Helper component proteinase</molecule>
    <text evidence="2">Required for aphid transmission and also has proteolytic activity. Only cleaves a Gly-Gly dipeptide at its own C-terminus. Interacts with virions and aphid stylets. Acts as a suppressor of RNA-mediated gene silencing, also known as post-transcriptional gene silencing (PTGS), a mechanism of plant viral defense that limits the accumulation of viral RNAs. May have RNA-binding activity.</text>
</comment>
<comment type="function">
    <molecule>Cytoplasmic inclusion protein</molecule>
    <text>Has helicase activity. It may be involved in replication.</text>
</comment>
<comment type="function">
    <molecule>6 kDa protein 1</molecule>
    <text evidence="4 7">Indispensable for virus replication (By similarity). Reduces the abundance of host transcripts related to jasmonic acid biosynthesis therefore altering the host defenses (By similarity). In order to increase its own stability, decreases host protein degradation pathways (By similarity).</text>
</comment>
<comment type="function">
    <molecule>6 kDa protein 2</molecule>
    <text evidence="3">Indispensable for virus replication.</text>
</comment>
<comment type="function">
    <molecule>Viral genome-linked protein</molecule>
    <text evidence="5">Mediates the cap-independent, EIF4E-dependent translation of viral genomic RNAs (By similarity). Binds to the cap-binding site of host EIF4E and thus interferes with the host EIF4E-dependent mRNA export and translation (By similarity). VPg-RNA directly binds EIF4E and is a template for transcription (By similarity). Also forms trimeric complexes with EIF4E-EIF4G, which are templates for translation (By similarity).</text>
</comment>
<comment type="function">
    <molecule>Nuclear inclusion protein A</molecule>
    <text evidence="2">Has RNA-binding and proteolytic activities.</text>
</comment>
<comment type="function">
    <molecule>Nuclear inclusion protein B</molecule>
    <text>An RNA-dependent RNA polymerase that plays an essential role in the virus replication.</text>
</comment>
<comment type="function">
    <molecule>Capsid protein</molecule>
    <text evidence="2">Involved in aphid transmission, cell-to-cell and systemis movement, encapsidation of the viral RNA and in the regulation of viral RNA amplification.</text>
</comment>
<comment type="catalytic activity">
    <molecule>Nuclear inclusion protein B</molecule>
    <reaction evidence="9">
        <text>RNA(n) + a ribonucleoside 5'-triphosphate = RNA(n+1) + diphosphate</text>
        <dbReference type="Rhea" id="RHEA:21248"/>
        <dbReference type="Rhea" id="RHEA-COMP:14527"/>
        <dbReference type="Rhea" id="RHEA-COMP:17342"/>
        <dbReference type="ChEBI" id="CHEBI:33019"/>
        <dbReference type="ChEBI" id="CHEBI:61557"/>
        <dbReference type="ChEBI" id="CHEBI:140395"/>
        <dbReference type="EC" id="2.7.7.48"/>
    </reaction>
</comment>
<comment type="catalytic activity">
    <molecule>Nuclear inclusion protein A</molecule>
    <reaction evidence="2">
        <text>Hydrolyzes glutaminyl bonds, and activity is further restricted by preferences for the amino acids in P6 - P1' that vary with the species of potyvirus, e.g. Glu-Xaa-Xaa-Tyr-Xaa-Gln-|-(Ser or Gly) for the enzyme from tobacco etch virus. The natural substrate is the viral polyprotein, but other proteins and oligopeptides containing the appropriate consensus sequence are also cleaved.</text>
        <dbReference type="EC" id="3.4.22.44"/>
    </reaction>
</comment>
<comment type="catalytic activity">
    <molecule>Helper component proteinase</molecule>
    <reaction evidence="2">
        <text>Hydrolyzes a Gly-|-Gly bond at its own C-terminus, commonly in the sequence -Tyr-Xaa-Val-Gly-|-Gly, in the processing of the potyviral polyprotein.</text>
        <dbReference type="EC" id="3.4.22.45"/>
    </reaction>
</comment>
<comment type="subunit">
    <molecule>Viral genome-linked protein</molecule>
    <text evidence="5">Interacts with host eIF4E protein (via cap-binding region); this interaction mediates the translation of the VPg-viral RNA conjugates (By similarity). Part of a complex that comprises VPg, RNA, host EIF4E and EIF4G; this interaction mediates the translation of the VPg-viral RNA conjugates (By similarity).</text>
</comment>
<comment type="subcellular location">
    <molecule>6 kDa protein 1</molecule>
    <subcellularLocation>
        <location>Host cytoplasmic vesicle</location>
    </subcellularLocation>
    <text evidence="4">Probably colocalizes with 6K2-induced vesicles associated with host chloroplasts.</text>
</comment>
<comment type="subcellular location">
    <molecule>6 kDa protein 2</molecule>
    <subcellularLocation>
        <location evidence="3">Host cytoplasmic vesicle</location>
    </subcellularLocation>
    <text evidence="3">6K-induced vesicles associate with host chloroplasts.</text>
</comment>
<comment type="subcellular location">
    <molecule>Viral genome-linked protein</molecule>
    <subcellularLocation>
        <location evidence="6">Host nucleus</location>
    </subcellularLocation>
    <text evidence="6">Binds to host plant eIF4E proteins in the host nucleus.</text>
</comment>
<comment type="subcellular location">
    <molecule>Capsid protein</molecule>
    <subcellularLocation>
        <location evidence="18">Virion</location>
    </subcellularLocation>
</comment>
<comment type="domain">
    <molecule>Helper component proteinase</molecule>
    <text>The N-terminus is involved in interaction with stylets. The central part is involved in interaction with virions and the C-terminus is involved in cell-to cell movement of the virus.</text>
</comment>
<comment type="PTM">
    <molecule>Viral genome-linked protein</molecule>
    <text evidence="3">VPg is uridylylated by the polymerase and is covalently attached to the 5'-end of the genomic RNA. This uridylylated form acts as a nucleotide-peptide primer for the polymerase (By similarity).</text>
</comment>
<comment type="PTM">
    <molecule>Genome polyprotein</molecule>
    <text evidence="1">Genome polyprotein of potyviruses undergoes post-translational proteolytic processing by the main proteinase NIa-pro resulting in the production of at least ten individual proteins. The P1 proteinase and the HC-pro cleave only their respective C-termini autocatalytically. 6K1 is essential for proper proteolytic separation of P3 from CI (By similarity).</text>
</comment>
<comment type="similarity">
    <text evidence="18">Belongs to the potyviridae genome polyprotein family.</text>
</comment>
<name>POLG_PPVRA</name>
<feature type="chain" id="PRO_0000420008" description="Genome polyprotein">
    <location>
        <begin position="1"/>
        <end position="3140"/>
    </location>
</feature>
<feature type="chain" id="PRO_0000040341" description="P1 protease" evidence="8">
    <location>
        <begin position="1"/>
        <end position="308"/>
    </location>
</feature>
<feature type="chain" id="PRO_0000040342" description="Helper component proteinase" evidence="8">
    <location>
        <begin position="309"/>
        <end position="766"/>
    </location>
</feature>
<feature type="chain" id="PRO_0000040343" description="Protein P3" evidence="1">
    <location>
        <begin position="767"/>
        <end position="1116"/>
    </location>
</feature>
<feature type="chain" id="PRO_0000040344" description="6 kDa protein 1" evidence="1">
    <location>
        <begin position="1117"/>
        <end position="1168"/>
    </location>
</feature>
<feature type="chain" id="PRO_0000040345" description="Cytoplasmic inclusion protein" evidence="1">
    <location>
        <begin position="1169"/>
        <end position="1803"/>
    </location>
</feature>
<feature type="chain" id="PRO_0000040346" description="6 kDa protein 2" evidence="1">
    <location>
        <begin position="1804"/>
        <end position="1856"/>
    </location>
</feature>
<feature type="chain" id="PRO_0000040347" description="Viral genome-linked protein" evidence="1">
    <location>
        <begin position="1857"/>
        <end position="2049"/>
    </location>
</feature>
<feature type="chain" id="PRO_0000040348" description="Nuclear inclusion protein A" evidence="1">
    <location>
        <begin position="2050"/>
        <end position="2292"/>
    </location>
</feature>
<feature type="chain" id="PRO_0000040349" description="Nuclear inclusion protein B" evidence="1">
    <location>
        <begin position="2293"/>
        <end position="2810"/>
    </location>
</feature>
<feature type="chain" id="PRO_0000040350" description="Capsid protein" evidence="1">
    <location>
        <begin position="2811"/>
        <end position="3140"/>
    </location>
</feature>
<feature type="domain" description="Peptidase S30" evidence="14">
    <location>
        <begin position="165"/>
        <end position="308"/>
    </location>
</feature>
<feature type="domain" description="Peptidase C6" evidence="13">
    <location>
        <begin position="644"/>
        <end position="766"/>
    </location>
</feature>
<feature type="domain" description="Helicase ATP-binding" evidence="10">
    <location>
        <begin position="1240"/>
        <end position="1392"/>
    </location>
</feature>
<feature type="domain" description="Helicase C-terminal" evidence="11">
    <location>
        <begin position="1411"/>
        <end position="1570"/>
    </location>
</feature>
<feature type="domain" description="Peptidase C4" evidence="12">
    <location>
        <begin position="2050"/>
        <end position="2268"/>
    </location>
</feature>
<feature type="domain" description="RdRp catalytic" evidence="9">
    <location>
        <begin position="2534"/>
        <end position="2658"/>
    </location>
</feature>
<feature type="short sequence motif" description="Involved in interaction with stylet and aphid transmission" evidence="1">
    <location>
        <begin position="360"/>
        <end position="363"/>
    </location>
</feature>
<feature type="short sequence motif" description="Involved in virions binding and aphid transmission" evidence="1">
    <location>
        <begin position="618"/>
        <end position="620"/>
    </location>
</feature>
<feature type="short sequence motif" description="DECH box">
    <location>
        <begin position="1342"/>
        <end position="1345"/>
    </location>
</feature>
<feature type="short sequence motif" description="Nuclear localization signal" evidence="8">
    <location>
        <begin position="1897"/>
        <end position="1904"/>
    </location>
</feature>
<feature type="active site" description="For P1 proteinase activity" evidence="14">
    <location>
        <position position="216"/>
    </location>
</feature>
<feature type="active site" description="For P1 proteinase activity" evidence="14">
    <location>
        <position position="225"/>
    </location>
</feature>
<feature type="active site" description="For P1 proteinase activity" evidence="14">
    <location>
        <position position="259"/>
    </location>
</feature>
<feature type="active site" description="For helper component proteinase activity" evidence="13">
    <location>
        <position position="652"/>
    </location>
</feature>
<feature type="active site" description="For helper component proteinase activity" evidence="13">
    <location>
        <position position="725"/>
    </location>
</feature>
<feature type="active site" description="For nuclear inclusion protein A activity" evidence="12">
    <location>
        <position position="2095"/>
    </location>
</feature>
<feature type="active site" description="For nuclear inclusion protein A activity" evidence="12">
    <location>
        <position position="2130"/>
    </location>
</feature>
<feature type="active site" description="For nuclear inclusion protein A activity" evidence="12">
    <location>
        <position position="2200"/>
    </location>
</feature>
<feature type="binding site" evidence="10">
    <location>
        <begin position="1253"/>
        <end position="1260"/>
    </location>
    <ligand>
        <name>ATP</name>
        <dbReference type="ChEBI" id="CHEBI:30616"/>
    </ligand>
</feature>
<feature type="site" description="Cleavage; by P1 proteinase" evidence="14">
    <location>
        <begin position="308"/>
        <end position="309"/>
    </location>
</feature>
<feature type="site" description="Cleavage; by autolysis" evidence="13">
    <location>
        <begin position="766"/>
        <end position="767"/>
    </location>
</feature>
<feature type="site" description="Cleavage; by NIa-pro" evidence="5">
    <location>
        <begin position="1116"/>
        <end position="1117"/>
    </location>
</feature>
<feature type="site" description="Cleavage; by NIa-pro" evidence="5">
    <location>
        <begin position="1168"/>
        <end position="1169"/>
    </location>
</feature>
<feature type="site" description="Cleavage; by NIa-pro" evidence="5">
    <location>
        <begin position="1803"/>
        <end position="1804"/>
    </location>
</feature>
<feature type="site" description="Cleavage; by NIa-pro" evidence="5">
    <location>
        <begin position="1856"/>
        <end position="1857"/>
    </location>
</feature>
<feature type="site" description="Cleavage; by NIa-pro" evidence="5">
    <location>
        <begin position="2049"/>
        <end position="2050"/>
    </location>
</feature>
<feature type="site" description="Cleavage; by NIa-pro" evidence="5">
    <location>
        <begin position="2292"/>
        <end position="2293"/>
    </location>
</feature>
<feature type="site" description="Cleavage; by NIa-pro" evidence="5">
    <location>
        <begin position="2810"/>
        <end position="2811"/>
    </location>
</feature>
<feature type="modified residue" description="O-(5'-phospho-RNA)-tyrosine" evidence="3">
    <location>
        <position position="1919"/>
    </location>
</feature>
<feature type="modified residue" description="Phosphoserine" evidence="16">
    <location>
        <position position="2835"/>
    </location>
</feature>
<feature type="modified residue" description="Phosphoserine" evidence="16">
    <location>
        <position position="2891"/>
    </location>
</feature>
<feature type="modified residue" description="Phosphoserine" evidence="16">
    <location>
        <position position="2911"/>
    </location>
</feature>
<feature type="modified residue" description="Phosphoserine" evidence="16">
    <location>
        <position position="2928"/>
    </location>
</feature>
<feature type="modified residue" description="Phosphothreonine" evidence="17">
    <location>
        <position position="3064"/>
    </location>
</feature>
<feature type="modified residue" description="Phosphothreonine" evidence="17">
    <location>
        <position position="3123"/>
    </location>
</feature>
<feature type="glycosylation site" description="O-linked (GlcNAc) threonine; by host" evidence="15">
    <location>
        <position position="2829"/>
    </location>
</feature>
<feature type="glycosylation site" description="O-linked (GlcNAc) threonine; by host" evidence="15">
    <location>
        <position position="2834"/>
    </location>
</feature>
<feature type="glycosylation site" description="O-linked (GlcNAc) threonine; by host" evidence="15">
    <location>
        <position position="2851"/>
    </location>
</feature>
<feature type="glycosylation site" description="O-linked (GlcNAc) threonine; by host" evidence="15">
    <location>
        <position position="2863"/>
    </location>
</feature>
<feature type="glycosylation site" description="O-linked (GlcNAc) threonine; by host" evidence="15">
    <location>
        <position position="2864"/>
    </location>
</feature>
<feature type="glycosylation site" description="O-linked (GlcNAc) threonine; by host" evidence="15">
    <location>
        <position position="2868"/>
    </location>
</feature>
<feature type="glycosylation site" description="O-linked (GlcNAc) serine; by host" evidence="15">
    <location>
        <position position="2875"/>
    </location>
</feature>
<feature type="mutagenesis site" description="Delayed viral accumulation in the host plant." evidence="17">
    <original>T</original>
    <variation>A</variation>
    <location>
        <position position="3064"/>
    </location>
</feature>
<feature type="mutagenesis site" description="Complete loss of viral infection in normal condition. Drastic loss of short-distance movement capacity of the virus. Some infection in agroinfiltrated leaves." evidence="17">
    <original>T</original>
    <variation>D</variation>
    <location>
        <position position="3064"/>
    </location>
</feature>
<feature type="mutagenesis site" description="Delayed and reduced viral accumulation in the host plant." evidence="17">
    <original>T</original>
    <variation>A</variation>
    <variation>N</variation>
    <location>
        <position position="3123"/>
    </location>
</feature>
<feature type="mutagenesis site" description="Complete loss of viral infection. Drastic loss of short-distance movement capacity of the virus. Some infection in agroinfiltrated leaves." evidence="17">
    <original>T</original>
    <variation>D</variation>
    <location>
        <position position="3123"/>
    </location>
</feature>
<dbReference type="EC" id="3.4.21.-"/>
<dbReference type="EC" id="3.4.22.45" evidence="2"/>
<dbReference type="EC" id="3.6.4.-"/>
<dbReference type="EC" id="3.4.22.44"/>
<dbReference type="EC" id="2.7.7.48"/>
<dbReference type="EMBL" id="M21847">
    <property type="protein sequence ID" value="AAA85458.1"/>
    <property type="molecule type" value="Genomic_RNA"/>
</dbReference>
<dbReference type="EMBL" id="M26965">
    <property type="protein sequence ID" value="AAA47085.1"/>
    <property type="molecule type" value="mRNA"/>
</dbReference>
<dbReference type="PIR" id="A60009">
    <property type="entry name" value="GNVSRA"/>
</dbReference>
<dbReference type="MEROPS" id="C04.001"/>
<dbReference type="ABCD" id="P17767">
    <property type="antibodies" value="1 sequenced antibody"/>
</dbReference>
<dbReference type="Proteomes" id="UP000006686">
    <property type="component" value="Genome"/>
</dbReference>
<dbReference type="GO" id="GO:0019029">
    <property type="term" value="C:helical viral capsid"/>
    <property type="evidence" value="ECO:0007669"/>
    <property type="project" value="UniProtKB-KW"/>
</dbReference>
<dbReference type="GO" id="GO:0044161">
    <property type="term" value="C:host cell cytoplasmic vesicle"/>
    <property type="evidence" value="ECO:0007669"/>
    <property type="project" value="UniProtKB-SubCell"/>
</dbReference>
<dbReference type="GO" id="GO:0042025">
    <property type="term" value="C:host cell nucleus"/>
    <property type="evidence" value="ECO:0007669"/>
    <property type="project" value="UniProtKB-SubCell"/>
</dbReference>
<dbReference type="GO" id="GO:0005524">
    <property type="term" value="F:ATP binding"/>
    <property type="evidence" value="ECO:0007669"/>
    <property type="project" value="UniProtKB-KW"/>
</dbReference>
<dbReference type="GO" id="GO:0004197">
    <property type="term" value="F:cysteine-type endopeptidase activity"/>
    <property type="evidence" value="ECO:0007669"/>
    <property type="project" value="InterPro"/>
</dbReference>
<dbReference type="GO" id="GO:0004386">
    <property type="term" value="F:helicase activity"/>
    <property type="evidence" value="ECO:0007669"/>
    <property type="project" value="UniProtKB-KW"/>
</dbReference>
<dbReference type="GO" id="GO:0016818">
    <property type="term" value="F:hydrolase activity, acting on acid anhydrides, in phosphorus-containing anhydrides"/>
    <property type="evidence" value="ECO:0007669"/>
    <property type="project" value="InterPro"/>
</dbReference>
<dbReference type="GO" id="GO:0003723">
    <property type="term" value="F:RNA binding"/>
    <property type="evidence" value="ECO:0007669"/>
    <property type="project" value="InterPro"/>
</dbReference>
<dbReference type="GO" id="GO:0003968">
    <property type="term" value="F:RNA-directed RNA polymerase activity"/>
    <property type="evidence" value="ECO:0007669"/>
    <property type="project" value="UniProtKB-KW"/>
</dbReference>
<dbReference type="GO" id="GO:0008236">
    <property type="term" value="F:serine-type peptidase activity"/>
    <property type="evidence" value="ECO:0007669"/>
    <property type="project" value="UniProtKB-KW"/>
</dbReference>
<dbReference type="GO" id="GO:0005198">
    <property type="term" value="F:structural molecule activity"/>
    <property type="evidence" value="ECO:0007669"/>
    <property type="project" value="InterPro"/>
</dbReference>
<dbReference type="GO" id="GO:0006351">
    <property type="term" value="P:DNA-templated transcription"/>
    <property type="evidence" value="ECO:0007669"/>
    <property type="project" value="InterPro"/>
</dbReference>
<dbReference type="GO" id="GO:0006508">
    <property type="term" value="P:proteolysis"/>
    <property type="evidence" value="ECO:0007669"/>
    <property type="project" value="UniProtKB-KW"/>
</dbReference>
<dbReference type="GO" id="GO:0052170">
    <property type="term" value="P:symbiont-mediated suppression of host innate immune response"/>
    <property type="evidence" value="ECO:0007669"/>
    <property type="project" value="UniProtKB-KW"/>
</dbReference>
<dbReference type="GO" id="GO:0039694">
    <property type="term" value="P:viral RNA genome replication"/>
    <property type="evidence" value="ECO:0007669"/>
    <property type="project" value="InterPro"/>
</dbReference>
<dbReference type="CDD" id="cd23175">
    <property type="entry name" value="ps-ssRNAv_Potyviridae_RdRp"/>
    <property type="match status" value="1"/>
</dbReference>
<dbReference type="Gene3D" id="3.30.70.270">
    <property type="match status" value="1"/>
</dbReference>
<dbReference type="Gene3D" id="3.90.70.150">
    <property type="entry name" value="Helper component proteinase"/>
    <property type="match status" value="1"/>
</dbReference>
<dbReference type="Gene3D" id="3.40.50.300">
    <property type="entry name" value="P-loop containing nucleotide triphosphate hydrolases"/>
    <property type="match status" value="2"/>
</dbReference>
<dbReference type="Gene3D" id="2.40.10.10">
    <property type="entry name" value="Trypsin-like serine proteases"/>
    <property type="match status" value="2"/>
</dbReference>
<dbReference type="InterPro" id="IPR011545">
    <property type="entry name" value="DEAD/DEAH_box_helicase_dom"/>
</dbReference>
<dbReference type="InterPro" id="IPR043502">
    <property type="entry name" value="DNA/RNA_pol_sf"/>
</dbReference>
<dbReference type="InterPro" id="IPR001456">
    <property type="entry name" value="HC-pro"/>
</dbReference>
<dbReference type="InterPro" id="IPR031159">
    <property type="entry name" value="HC_PRO_CPD_dom"/>
</dbReference>
<dbReference type="InterPro" id="IPR042308">
    <property type="entry name" value="HC_PRO_CPD_sf"/>
</dbReference>
<dbReference type="InterPro" id="IPR014001">
    <property type="entry name" value="Helicase_ATP-bd"/>
</dbReference>
<dbReference type="InterPro" id="IPR001650">
    <property type="entry name" value="Helicase_C-like"/>
</dbReference>
<dbReference type="InterPro" id="IPR027417">
    <property type="entry name" value="P-loop_NTPase"/>
</dbReference>
<dbReference type="InterPro" id="IPR002540">
    <property type="entry name" value="Pept_S30_P1_potyvir"/>
</dbReference>
<dbReference type="InterPro" id="IPR009003">
    <property type="entry name" value="Peptidase_S1_PA"/>
</dbReference>
<dbReference type="InterPro" id="IPR043504">
    <property type="entry name" value="Peptidase_S1_PA_chymotrypsin"/>
</dbReference>
<dbReference type="InterPro" id="IPR001592">
    <property type="entry name" value="Poty_coat"/>
</dbReference>
<dbReference type="InterPro" id="IPR001730">
    <property type="entry name" value="Potyv_NIa-pro_dom"/>
</dbReference>
<dbReference type="InterPro" id="IPR039560">
    <property type="entry name" value="Potyvirid-P3"/>
</dbReference>
<dbReference type="InterPro" id="IPR013648">
    <property type="entry name" value="PP_Potyviridae"/>
</dbReference>
<dbReference type="InterPro" id="IPR043128">
    <property type="entry name" value="Rev_trsase/Diguanyl_cyclase"/>
</dbReference>
<dbReference type="InterPro" id="IPR001205">
    <property type="entry name" value="RNA-dir_pol_C"/>
</dbReference>
<dbReference type="InterPro" id="IPR007094">
    <property type="entry name" value="RNA-dir_pol_PSvirus"/>
</dbReference>
<dbReference type="PANTHER" id="PTHR43519">
    <property type="entry name" value="ATP-DEPENDENT RNA HELICASE HRPB"/>
    <property type="match status" value="1"/>
</dbReference>
<dbReference type="PANTHER" id="PTHR43519:SF1">
    <property type="entry name" value="ATP-DEPENDENT RNA HELICASE HRPB"/>
    <property type="match status" value="1"/>
</dbReference>
<dbReference type="Pfam" id="PF00270">
    <property type="entry name" value="DEAD"/>
    <property type="match status" value="1"/>
</dbReference>
<dbReference type="Pfam" id="PF00271">
    <property type="entry name" value="Helicase_C"/>
    <property type="match status" value="1"/>
</dbReference>
<dbReference type="Pfam" id="PF00863">
    <property type="entry name" value="Peptidase_C4"/>
    <property type="match status" value="1"/>
</dbReference>
<dbReference type="Pfam" id="PF00851">
    <property type="entry name" value="Peptidase_C6"/>
    <property type="match status" value="1"/>
</dbReference>
<dbReference type="Pfam" id="PF01577">
    <property type="entry name" value="Peptidase_S30"/>
    <property type="match status" value="1"/>
</dbReference>
<dbReference type="Pfam" id="PF00767">
    <property type="entry name" value="Poty_coat"/>
    <property type="match status" value="1"/>
</dbReference>
<dbReference type="Pfam" id="PF08440">
    <property type="entry name" value="Poty_PP"/>
    <property type="match status" value="1"/>
</dbReference>
<dbReference type="Pfam" id="PF13608">
    <property type="entry name" value="Potyvirid-P3"/>
    <property type="match status" value="1"/>
</dbReference>
<dbReference type="Pfam" id="PF00680">
    <property type="entry name" value="RdRP_1"/>
    <property type="match status" value="1"/>
</dbReference>
<dbReference type="PRINTS" id="PR00966">
    <property type="entry name" value="NIAPOTYPTASE"/>
</dbReference>
<dbReference type="SMART" id="SM00487">
    <property type="entry name" value="DEXDc"/>
    <property type="match status" value="1"/>
</dbReference>
<dbReference type="SMART" id="SM00490">
    <property type="entry name" value="HELICc"/>
    <property type="match status" value="1"/>
</dbReference>
<dbReference type="SUPFAM" id="SSF56672">
    <property type="entry name" value="DNA/RNA polymerases"/>
    <property type="match status" value="1"/>
</dbReference>
<dbReference type="SUPFAM" id="SSF52540">
    <property type="entry name" value="P-loop containing nucleoside triphosphate hydrolases"/>
    <property type="match status" value="2"/>
</dbReference>
<dbReference type="SUPFAM" id="SSF50494">
    <property type="entry name" value="Trypsin-like serine proteases"/>
    <property type="match status" value="1"/>
</dbReference>
<dbReference type="PROSITE" id="PS51744">
    <property type="entry name" value="HC_PRO_CPD"/>
    <property type="match status" value="1"/>
</dbReference>
<dbReference type="PROSITE" id="PS51192">
    <property type="entry name" value="HELICASE_ATP_BIND_1"/>
    <property type="match status" value="1"/>
</dbReference>
<dbReference type="PROSITE" id="PS51194">
    <property type="entry name" value="HELICASE_CTER"/>
    <property type="match status" value="1"/>
</dbReference>
<dbReference type="PROSITE" id="PS51436">
    <property type="entry name" value="POTYVIRUS_NIA_PRO"/>
    <property type="match status" value="1"/>
</dbReference>
<dbReference type="PROSITE" id="PS51871">
    <property type="entry name" value="PV_P1_PRO"/>
    <property type="match status" value="1"/>
</dbReference>
<dbReference type="PROSITE" id="PS50507">
    <property type="entry name" value="RDRP_SSRNA_POS"/>
    <property type="match status" value="1"/>
</dbReference>
<evidence type="ECO:0000250" key="1"/>
<evidence type="ECO:0000250" key="2">
    <source>
        <dbReference type="UniProtKB" id="P04517"/>
    </source>
</evidence>
<evidence type="ECO:0000250" key="3">
    <source>
        <dbReference type="UniProtKB" id="P09814"/>
    </source>
</evidence>
<evidence type="ECO:0000250" key="4">
    <source>
        <dbReference type="UniProtKB" id="P13529"/>
    </source>
</evidence>
<evidence type="ECO:0000250" key="5">
    <source>
        <dbReference type="UniProtKB" id="P18247"/>
    </source>
</evidence>
<evidence type="ECO:0000250" key="6">
    <source>
        <dbReference type="UniProtKB" id="P21231"/>
    </source>
</evidence>
<evidence type="ECO:0000250" key="7">
    <source>
        <dbReference type="UniProtKB" id="P89509"/>
    </source>
</evidence>
<evidence type="ECO:0000255" key="8"/>
<evidence type="ECO:0000255" key="9">
    <source>
        <dbReference type="PROSITE-ProRule" id="PRU00539"/>
    </source>
</evidence>
<evidence type="ECO:0000255" key="10">
    <source>
        <dbReference type="PROSITE-ProRule" id="PRU00541"/>
    </source>
</evidence>
<evidence type="ECO:0000255" key="11">
    <source>
        <dbReference type="PROSITE-ProRule" id="PRU00542"/>
    </source>
</evidence>
<evidence type="ECO:0000255" key="12">
    <source>
        <dbReference type="PROSITE-ProRule" id="PRU00766"/>
    </source>
</evidence>
<evidence type="ECO:0000255" key="13">
    <source>
        <dbReference type="PROSITE-ProRule" id="PRU01080"/>
    </source>
</evidence>
<evidence type="ECO:0000255" key="14">
    <source>
        <dbReference type="PROSITE-ProRule" id="PRU01219"/>
    </source>
</evidence>
<evidence type="ECO:0000269" key="15">
    <source>
    </source>
</evidence>
<evidence type="ECO:0000269" key="16">
    <source>
    </source>
</evidence>
<evidence type="ECO:0000269" key="17">
    <source>
    </source>
</evidence>
<evidence type="ECO:0000305" key="18"/>